<organism>
    <name type="scientific">Lactobacillus johnsonii (strain CNCM I-12250 / La1 / NCC 533)</name>
    <dbReference type="NCBI Taxonomy" id="257314"/>
    <lineage>
        <taxon>Bacteria</taxon>
        <taxon>Bacillati</taxon>
        <taxon>Bacillota</taxon>
        <taxon>Bacilli</taxon>
        <taxon>Lactobacillales</taxon>
        <taxon>Lactobacillaceae</taxon>
        <taxon>Lactobacillus</taxon>
    </lineage>
</organism>
<evidence type="ECO:0000255" key="1">
    <source>
        <dbReference type="HAMAP-Rule" id="MF_00123"/>
    </source>
</evidence>
<accession>Q74KR5</accession>
<feature type="chain" id="PRO_0000242035" description="Arginine--tRNA ligase">
    <location>
        <begin position="1"/>
        <end position="558"/>
    </location>
</feature>
<feature type="short sequence motif" description="'HIGH' region">
    <location>
        <begin position="119"/>
        <end position="129"/>
    </location>
</feature>
<comment type="catalytic activity">
    <reaction evidence="1">
        <text>tRNA(Arg) + L-arginine + ATP = L-arginyl-tRNA(Arg) + AMP + diphosphate</text>
        <dbReference type="Rhea" id="RHEA:20301"/>
        <dbReference type="Rhea" id="RHEA-COMP:9658"/>
        <dbReference type="Rhea" id="RHEA-COMP:9673"/>
        <dbReference type="ChEBI" id="CHEBI:30616"/>
        <dbReference type="ChEBI" id="CHEBI:32682"/>
        <dbReference type="ChEBI" id="CHEBI:33019"/>
        <dbReference type="ChEBI" id="CHEBI:78442"/>
        <dbReference type="ChEBI" id="CHEBI:78513"/>
        <dbReference type="ChEBI" id="CHEBI:456215"/>
        <dbReference type="EC" id="6.1.1.19"/>
    </reaction>
</comment>
<comment type="subunit">
    <text evidence="1">Monomer.</text>
</comment>
<comment type="subcellular location">
    <subcellularLocation>
        <location evidence="1">Cytoplasm</location>
    </subcellularLocation>
</comment>
<comment type="similarity">
    <text evidence="1">Belongs to the class-I aminoacyl-tRNA synthetase family.</text>
</comment>
<reference key="1">
    <citation type="journal article" date="2004" name="Proc. Natl. Acad. Sci. U.S.A.">
        <title>The genome sequence of the probiotic intestinal bacterium Lactobacillus johnsonii NCC 533.</title>
        <authorList>
            <person name="Pridmore R.D."/>
            <person name="Berger B."/>
            <person name="Desiere F."/>
            <person name="Vilanova D."/>
            <person name="Barretto C."/>
            <person name="Pittet A.-C."/>
            <person name="Zwahlen M.-C."/>
            <person name="Rouvet M."/>
            <person name="Altermann E."/>
            <person name="Barrangou R."/>
            <person name="Mollet B."/>
            <person name="Mercenier A."/>
            <person name="Klaenhammer T."/>
            <person name="Arigoni F."/>
            <person name="Schell M.A."/>
        </authorList>
    </citation>
    <scope>NUCLEOTIDE SEQUENCE [LARGE SCALE GENOMIC DNA]</scope>
    <source>
        <strain>CNCM I-1225 / La1 / NCC 533</strain>
    </source>
</reference>
<proteinExistence type="inferred from homology"/>
<protein>
    <recommendedName>
        <fullName evidence="1">Arginine--tRNA ligase</fullName>
        <ecNumber evidence="1">6.1.1.19</ecNumber>
    </recommendedName>
    <alternativeName>
        <fullName evidence="1">Arginyl-tRNA synthetase</fullName>
        <shortName evidence="1">ArgRS</shortName>
    </alternativeName>
</protein>
<gene>
    <name evidence="1" type="primary">argS</name>
    <name type="ordered locus">LJ_0686</name>
</gene>
<name>SYR_LACJO</name>
<sequence length="558" mass="63028">MDFKQKVVDLVSEQVDLPKEKISMLIERPKNPKMGDYAFPAFALAKIEHKNPALIAKDIAEKISDDNFTSIQAVGPYVNFAIDHAKLVNATLNDVLTEKEHFGDQKLGEGNVPIDMSSPNIAKPMSMGHLRSTVIGNSIAKTLEKVGYTPIKINYLGDYGTQFGKLITAYRLWGNEGDVKKDPITNLFHYYVKFHEEAEKDPKLEDEGRAAFKKLENGDEEEIKLWKWFREVSLQEFNRIYKELGVTFDSYNGEAFFNDKMQPVVDELREKGLLEESRGAQVVNLGEDENPALILKSDGSSLYMTRDLAAALYRKKEYDFVMSLYVAGGEQTGHFKQLKQVLKKMGYDWSDNIHHIPFGLITQGGKKLSTRKGNVVFLDQVLKDAVSLAEQQIEEKNPNLSNKKQVAHDVGVGAVVFHDLKNDRMDNFDFDLEEVVRFEGDTGPYVQYTNARAQSILRKANKEISMDNLSLNDDWSFAVAKALADFPAIVEKASEKFEPSIIAKYALDLSKKFNKYYANVRILDEDNQLNARLALVQATSIVLTEALRLLGVNAPKEM</sequence>
<keyword id="KW-0030">Aminoacyl-tRNA synthetase</keyword>
<keyword id="KW-0067">ATP-binding</keyword>
<keyword id="KW-0963">Cytoplasm</keyword>
<keyword id="KW-0436">Ligase</keyword>
<keyword id="KW-0547">Nucleotide-binding</keyword>
<keyword id="KW-0648">Protein biosynthesis</keyword>
<dbReference type="EC" id="6.1.1.19" evidence="1"/>
<dbReference type="EMBL" id="AE017198">
    <property type="protein sequence ID" value="AAS08504.1"/>
    <property type="molecule type" value="Genomic_DNA"/>
</dbReference>
<dbReference type="RefSeq" id="WP_011161634.1">
    <property type="nucleotide sequence ID" value="NC_005362.1"/>
</dbReference>
<dbReference type="SMR" id="Q74KR5"/>
<dbReference type="KEGG" id="ljo:LJ_0686"/>
<dbReference type="PATRIC" id="fig|257314.6.peg.539"/>
<dbReference type="eggNOG" id="COG0018">
    <property type="taxonomic scope" value="Bacteria"/>
</dbReference>
<dbReference type="HOGENOM" id="CLU_006406_6_1_9"/>
<dbReference type="Proteomes" id="UP000000581">
    <property type="component" value="Chromosome"/>
</dbReference>
<dbReference type="GO" id="GO:0005737">
    <property type="term" value="C:cytoplasm"/>
    <property type="evidence" value="ECO:0007669"/>
    <property type="project" value="UniProtKB-SubCell"/>
</dbReference>
<dbReference type="GO" id="GO:0004814">
    <property type="term" value="F:arginine-tRNA ligase activity"/>
    <property type="evidence" value="ECO:0007669"/>
    <property type="project" value="UniProtKB-UniRule"/>
</dbReference>
<dbReference type="GO" id="GO:0005524">
    <property type="term" value="F:ATP binding"/>
    <property type="evidence" value="ECO:0007669"/>
    <property type="project" value="UniProtKB-UniRule"/>
</dbReference>
<dbReference type="GO" id="GO:0006420">
    <property type="term" value="P:arginyl-tRNA aminoacylation"/>
    <property type="evidence" value="ECO:0007669"/>
    <property type="project" value="UniProtKB-UniRule"/>
</dbReference>
<dbReference type="CDD" id="cd07956">
    <property type="entry name" value="Anticodon_Ia_Arg"/>
    <property type="match status" value="1"/>
</dbReference>
<dbReference type="CDD" id="cd00671">
    <property type="entry name" value="ArgRS_core"/>
    <property type="match status" value="1"/>
</dbReference>
<dbReference type="FunFam" id="3.40.50.620:FF:000116">
    <property type="entry name" value="Arginine--tRNA ligase"/>
    <property type="match status" value="1"/>
</dbReference>
<dbReference type="FunFam" id="1.10.730.10:FF:000006">
    <property type="entry name" value="Arginyl-tRNA synthetase 2, mitochondrial"/>
    <property type="match status" value="1"/>
</dbReference>
<dbReference type="Gene3D" id="3.30.1360.70">
    <property type="entry name" value="Arginyl tRNA synthetase N-terminal domain"/>
    <property type="match status" value="1"/>
</dbReference>
<dbReference type="Gene3D" id="3.40.50.620">
    <property type="entry name" value="HUPs"/>
    <property type="match status" value="1"/>
</dbReference>
<dbReference type="Gene3D" id="1.10.730.10">
    <property type="entry name" value="Isoleucyl-tRNA Synthetase, Domain 1"/>
    <property type="match status" value="1"/>
</dbReference>
<dbReference type="HAMAP" id="MF_00123">
    <property type="entry name" value="Arg_tRNA_synth"/>
    <property type="match status" value="1"/>
</dbReference>
<dbReference type="InterPro" id="IPR001278">
    <property type="entry name" value="Arg-tRNA-ligase"/>
</dbReference>
<dbReference type="InterPro" id="IPR005148">
    <property type="entry name" value="Arg-tRNA-synth_N"/>
</dbReference>
<dbReference type="InterPro" id="IPR036695">
    <property type="entry name" value="Arg-tRNA-synth_N_sf"/>
</dbReference>
<dbReference type="InterPro" id="IPR035684">
    <property type="entry name" value="ArgRS_core"/>
</dbReference>
<dbReference type="InterPro" id="IPR008909">
    <property type="entry name" value="DALR_anticod-bd"/>
</dbReference>
<dbReference type="InterPro" id="IPR014729">
    <property type="entry name" value="Rossmann-like_a/b/a_fold"/>
</dbReference>
<dbReference type="InterPro" id="IPR009080">
    <property type="entry name" value="tRNAsynth_Ia_anticodon-bd"/>
</dbReference>
<dbReference type="NCBIfam" id="TIGR00456">
    <property type="entry name" value="argS"/>
    <property type="match status" value="1"/>
</dbReference>
<dbReference type="PANTHER" id="PTHR11956:SF5">
    <property type="entry name" value="ARGININE--TRNA LIGASE, CYTOPLASMIC"/>
    <property type="match status" value="1"/>
</dbReference>
<dbReference type="PANTHER" id="PTHR11956">
    <property type="entry name" value="ARGINYL-TRNA SYNTHETASE"/>
    <property type="match status" value="1"/>
</dbReference>
<dbReference type="Pfam" id="PF03485">
    <property type="entry name" value="Arg_tRNA_synt_N"/>
    <property type="match status" value="1"/>
</dbReference>
<dbReference type="Pfam" id="PF05746">
    <property type="entry name" value="DALR_1"/>
    <property type="match status" value="1"/>
</dbReference>
<dbReference type="Pfam" id="PF00750">
    <property type="entry name" value="tRNA-synt_1d"/>
    <property type="match status" value="1"/>
</dbReference>
<dbReference type="PRINTS" id="PR01038">
    <property type="entry name" value="TRNASYNTHARG"/>
</dbReference>
<dbReference type="SMART" id="SM01016">
    <property type="entry name" value="Arg_tRNA_synt_N"/>
    <property type="match status" value="1"/>
</dbReference>
<dbReference type="SMART" id="SM00836">
    <property type="entry name" value="DALR_1"/>
    <property type="match status" value="1"/>
</dbReference>
<dbReference type="SUPFAM" id="SSF47323">
    <property type="entry name" value="Anticodon-binding domain of a subclass of class I aminoacyl-tRNA synthetases"/>
    <property type="match status" value="1"/>
</dbReference>
<dbReference type="SUPFAM" id="SSF55190">
    <property type="entry name" value="Arginyl-tRNA synthetase (ArgRS), N-terminal 'additional' domain"/>
    <property type="match status" value="1"/>
</dbReference>
<dbReference type="SUPFAM" id="SSF52374">
    <property type="entry name" value="Nucleotidylyl transferase"/>
    <property type="match status" value="1"/>
</dbReference>